<name>KCNA2_XENLA</name>
<reference key="1">
    <citation type="journal article" date="1990" name="Neuron">
        <title>A potassium channel gene is expressed at neural induction.</title>
        <authorList>
            <person name="Ribera A.B."/>
        </authorList>
    </citation>
    <scope>NUCLEOTIDE SEQUENCE [GENOMIC DNA]</scope>
    <scope>FUNCTION</scope>
    <scope>SUBCELLULAR LOCATION</scope>
    <scope>TRANSPORTER ACTIVITY</scope>
</reference>
<reference key="2">
    <citation type="journal article" date="2015" name="Nat. Genet.">
        <title>De novo loss- or gain-of-function mutations in KCNA2 cause epileptic encephalopathy.</title>
        <authorList>
            <person name="Syrbe S."/>
            <person name="Hedrich U.B."/>
            <person name="Riesch E."/>
            <person name="Djemie T."/>
            <person name="Mueller S."/>
            <person name="Moeller R.S."/>
            <person name="Maher B."/>
            <person name="Hernandez-Hernandez L."/>
            <person name="Synofzik M."/>
            <person name="Caglayan H.S."/>
            <person name="Arslan M."/>
            <person name="Serratosa J.M."/>
            <person name="Nothnagel M."/>
            <person name="May P."/>
            <person name="Krause R."/>
            <person name="Loeffler H."/>
            <person name="Detert K."/>
            <person name="Dorn T."/>
            <person name="Vogt H."/>
            <person name="Kraemer G."/>
            <person name="Schoels L."/>
            <person name="Mullis P.E."/>
            <person name="Linnankivi T."/>
            <person name="Lehesjoki A.E."/>
            <person name="Sterbova K."/>
            <person name="Craiu D.C."/>
            <person name="Hoffman-Zacharska D."/>
            <person name="Korff C.M."/>
            <person name="Weber Y.G."/>
            <person name="Steinlin M."/>
            <person name="Gallati S."/>
            <person name="Bertsche A."/>
            <person name="Bernhard M.K."/>
            <person name="Merkenschlager A."/>
            <person name="Kiess W."/>
            <person name="Gonzalez M."/>
            <person name="Zuechner S."/>
            <person name="Palotie A."/>
            <person name="Suls A."/>
            <person name="De Jonghe P."/>
            <person name="Helbig I."/>
            <person name="Biskup S."/>
            <person name="Wolff M."/>
            <person name="Maljevic S."/>
            <person name="Schuele R."/>
            <person name="Sisodiya S.M."/>
            <person name="Weckhuysen S."/>
            <person name="Lerche H."/>
            <person name="Lemke J.R."/>
        </authorList>
    </citation>
    <scope>MUTAGENESIS OF ILE-263; ARG-297; LEU-298 AND PRO-405</scope>
</reference>
<evidence type="ECO:0000250" key="1">
    <source>
        <dbReference type="UniProtKB" id="P63141"/>
    </source>
</evidence>
<evidence type="ECO:0000250" key="2">
    <source>
        <dbReference type="UniProtKB" id="P63142"/>
    </source>
</evidence>
<evidence type="ECO:0000255" key="3"/>
<evidence type="ECO:0000256" key="4">
    <source>
        <dbReference type="SAM" id="MobiDB-lite"/>
    </source>
</evidence>
<evidence type="ECO:0000269" key="5">
    <source>
    </source>
</evidence>
<evidence type="ECO:0000305" key="6"/>
<gene>
    <name type="primary">kcna2</name>
</gene>
<accession>P22739</accession>
<comment type="function">
    <text evidence="1 2 5">Voltage-gated potassium channel that mediates transmembrane potassium transport in excitable membranes, primarily in the brain and central nervous system. Prevents aberrant action potential firing and regulates neuronal output. Forms tetrameric potassium-selective channels through which potassium ions pass in accordance with their electrochemical gradient. The channel alternates between opened and closed conformations in response to the voltage difference across the membrane (PubMed:2223094). Can form functional homotetrameric channels and heterotetrameric channels with other family members; the channels characteristics depend critically on the types of channel-forming alpha subunits that are present (By similarity). Channel properties are modulated by cytoplasmic beta subunits that regulate the subcellular location of the alpha subunits (By similarity). In vivo, membranes probably contain a mixture of heteromeric potassium channel complexes, making it difficult to assign currents observed in intact tissues to any particular potassium channel family member. Homotetrameric KCNA2 forms a delayed-rectifier potassium channel that opens in response to membrane depolarization, followed by slow spontaneous channel closure (PubMed:2223094). Regulates neuronal excitability and plays a role as pacemaker in the regulation of neuronal action potentials (By similarity). KCNA2-containing channels play a presynaptic role and prevent hyperexcitability and aberrant action potential firing (By similarity). Response to toxins that are selective for KCNA2-containing potassium channels suggests that in Purkinje cells, dendritic subthreshold KCNA2-containing potassium channels prevent random spontaneous calcium spikes, suppressing dendritic hyperexcitability without hindering the generation of somatic action potentials, and thereby play an important role in motor coordination (By similarity). Plays a role in the induction of long-term potentiation of neuron excitability in the CA3 layer of the hippocampus (By similarity).</text>
</comment>
<comment type="catalytic activity">
    <reaction evidence="5">
        <text>K(+)(in) = K(+)(out)</text>
        <dbReference type="Rhea" id="RHEA:29463"/>
        <dbReference type="ChEBI" id="CHEBI:29103"/>
    </reaction>
</comment>
<comment type="subunit">
    <text evidence="2">Homotetramer and heterotetramer with other family members.</text>
</comment>
<comment type="subcellular location">
    <subcellularLocation>
        <location evidence="5">Cell membrane</location>
        <topology evidence="6">Multi-pass membrane protein</topology>
    </subcellularLocation>
</comment>
<comment type="tissue specificity">
    <text evidence="5">Detected in tadpole brain and spinal cord.</text>
</comment>
<comment type="domain">
    <text evidence="2">The cytoplasmic N-terminus is important for tetramerization. Interactions between the different subunits modulate the gating characteristics (By similarity).</text>
</comment>
<comment type="domain">
    <text evidence="2">The transmembrane segment S4 functions as a voltage-sensor and is characterized by a series of positively charged amino acids at every third position. Channel opening and closing is effected by a conformation change that affects the position and orientation of the voltage-sensor paddle formed by S3 and S4 within the membrane. A transmembrane electric field that is positive inside would push the positively charged S4 segment outwards, thereby opening the pore, while a field that is negative inside would pull the S4 segment inwards and close the pore. Changes in the position and orientation of S4 are then transmitted to the activation gate formed by the inner helix bundle via the S4-S5 linker region.</text>
</comment>
<comment type="similarity">
    <text evidence="6">Belongs to the potassium channel family. A (Shaker) (TC 1.A.1.2) subfamily. Kv1.2/KCNA2 sub-subfamily.</text>
</comment>
<keyword id="KW-1003">Cell membrane</keyword>
<keyword id="KW-0325">Glycoprotein</keyword>
<keyword id="KW-0407">Ion channel</keyword>
<keyword id="KW-0406">Ion transport</keyword>
<keyword id="KW-0449">Lipoprotein</keyword>
<keyword id="KW-0472">Membrane</keyword>
<keyword id="KW-0564">Palmitate</keyword>
<keyword id="KW-0597">Phosphoprotein</keyword>
<keyword id="KW-0630">Potassium</keyword>
<keyword id="KW-0631">Potassium channel</keyword>
<keyword id="KW-0633">Potassium transport</keyword>
<keyword id="KW-1185">Reference proteome</keyword>
<keyword id="KW-0812">Transmembrane</keyword>
<keyword id="KW-1133">Transmembrane helix</keyword>
<keyword id="KW-0813">Transport</keyword>
<keyword id="KW-0851">Voltage-gated channel</keyword>
<proteinExistence type="evidence at protein level"/>
<feature type="chain" id="PRO_0000053976" description="Potassium voltage-gated channel subfamily A member 2">
    <location>
        <begin position="1"/>
        <end position="499"/>
    </location>
</feature>
<feature type="topological domain" description="Cytoplasmic" evidence="2">
    <location>
        <begin position="1"/>
        <end position="160"/>
    </location>
</feature>
<feature type="transmembrane region" description="Helical; Name=Segment S1" evidence="2">
    <location>
        <begin position="161"/>
        <end position="182"/>
    </location>
</feature>
<feature type="topological domain" description="Extracellular" evidence="2">
    <location>
        <begin position="183"/>
        <end position="221"/>
    </location>
</feature>
<feature type="transmembrane region" description="Helical; Name=Segment S2" evidence="2">
    <location>
        <begin position="222"/>
        <end position="243"/>
    </location>
</feature>
<feature type="topological domain" description="Cytoplasmic" evidence="2">
    <location>
        <begin position="244"/>
        <end position="254"/>
    </location>
</feature>
<feature type="transmembrane region" description="Helical; Name=Segment S3" evidence="2">
    <location>
        <begin position="255"/>
        <end position="275"/>
    </location>
</feature>
<feature type="topological domain" description="Extracellular" evidence="2">
    <location>
        <begin position="276"/>
        <end position="289"/>
    </location>
</feature>
<feature type="transmembrane region" description="Helical; Voltage-sensor; Name=Segment S4" evidence="2">
    <location>
        <begin position="290"/>
        <end position="310"/>
    </location>
</feature>
<feature type="topological domain" description="Cytoplasmic" evidence="2">
    <location>
        <begin position="311"/>
        <end position="325"/>
    </location>
</feature>
<feature type="transmembrane region" description="Helical; Name=Segment S5" evidence="2">
    <location>
        <begin position="326"/>
        <end position="347"/>
    </location>
</feature>
<feature type="topological domain" description="Extracellular" evidence="2">
    <location>
        <begin position="348"/>
        <end position="361"/>
    </location>
</feature>
<feature type="intramembrane region" description="Helical; Name=Pore helix" evidence="2">
    <location>
        <begin position="362"/>
        <end position="373"/>
    </location>
</feature>
<feature type="intramembrane region" evidence="2">
    <location>
        <begin position="374"/>
        <end position="381"/>
    </location>
</feature>
<feature type="topological domain" description="Extracellular" evidence="2">
    <location>
        <begin position="382"/>
        <end position="388"/>
    </location>
</feature>
<feature type="transmembrane region" description="Helical; Name=Segment S6" evidence="2">
    <location>
        <begin position="389"/>
        <end position="417"/>
    </location>
</feature>
<feature type="topological domain" description="Cytoplasmic" evidence="2">
    <location>
        <begin position="418"/>
        <end position="499"/>
    </location>
</feature>
<feature type="region of interest" description="Tetramerization domain" evidence="2">
    <location>
        <begin position="1"/>
        <end position="125"/>
    </location>
</feature>
<feature type="region of interest" description="Disordered" evidence="4">
    <location>
        <begin position="1"/>
        <end position="27"/>
    </location>
</feature>
<feature type="region of interest" description="S4-S5 linker" evidence="2">
    <location>
        <begin position="312"/>
        <end position="325"/>
    </location>
</feature>
<feature type="short sequence motif" description="Selectivity filter" evidence="2">
    <location>
        <begin position="374"/>
        <end position="379"/>
    </location>
</feature>
<feature type="short sequence motif" description="PDZ-binding" evidence="2">
    <location>
        <begin position="497"/>
        <end position="499"/>
    </location>
</feature>
<feature type="site" description="Important for normal, slow channel gating" evidence="2">
    <location>
        <position position="252"/>
    </location>
</feature>
<feature type="site" description="Important for binding with the scorpion mesomartoxin; when the scorpion mesomartoxin-rKv1.2/KCNA2 interaction is modeled, this residue is close to the 'Y-57' residue of the toxin" evidence="2">
    <location>
        <position position="381"/>
    </location>
</feature>
<feature type="lipid moiety-binding region" description="S-palmitoyl cysteine" evidence="3">
    <location>
        <position position="244"/>
    </location>
</feature>
<feature type="glycosylation site" description="N-linked (GlcNAc...) asparagine" evidence="3">
    <location>
        <position position="207"/>
    </location>
</feature>
<feature type="mutagenesis site" description="Causes a dramatic reduction in current amplitude in a dominant-negative manner. Loss of channel function. Causes a depolarizing shift in voltage-dependent activation.">
    <original>I</original>
    <variation>T</variation>
    <location>
        <position position="263"/>
    </location>
</feature>
<feature type="mutagenesis site" description="Causes a gain of function with increased current amplitude and negative shifting of the voltage dependence of activation by -40 mV resulting in permanent opening of the channel. The effect is dominant on the wild-type protein.">
    <original>R</original>
    <variation>Q</variation>
    <location>
        <position position="297"/>
    </location>
</feature>
<feature type="mutagenesis site" description="Causes a gain of function with increased current amplitude and negative shifting of the voltage dependence of activation by -50 mV resulting in permanent opening of the channel. The effect is dominant on the wild-type protein.">
    <original>L</original>
    <variation>F</variation>
    <location>
        <position position="298"/>
    </location>
</feature>
<feature type="mutagenesis site" description="Causes a dramatic reduction in current amplitude in a dominant-negative manner. Loss of channel function.">
    <original>P</original>
    <variation>L</variation>
    <location>
        <position position="405"/>
    </location>
</feature>
<organism>
    <name type="scientific">Xenopus laevis</name>
    <name type="common">African clawed frog</name>
    <dbReference type="NCBI Taxonomy" id="8355"/>
    <lineage>
        <taxon>Eukaryota</taxon>
        <taxon>Metazoa</taxon>
        <taxon>Chordata</taxon>
        <taxon>Craniata</taxon>
        <taxon>Vertebrata</taxon>
        <taxon>Euteleostomi</taxon>
        <taxon>Amphibia</taxon>
        <taxon>Batrachia</taxon>
        <taxon>Anura</taxon>
        <taxon>Pipoidea</taxon>
        <taxon>Pipidae</taxon>
        <taxon>Xenopodinae</taxon>
        <taxon>Xenopus</taxon>
        <taxon>Xenopus</taxon>
    </lineage>
</organism>
<sequence>MTVATGDLTDGSVGFAGHPQDSYDPEPDHECCERVVINISGLRFETQLKTLSQFPETLLGDPKKRMRYFDPLRNEYFFDRNRPSFDAILYFYQSGGRLRRPVNVPLDIFSEEIRFYELGEEAMEIFREDEGFIKEEERPLPDNEFQKQVWLLFEYPESSGPARIIAIISVTVILISIVSFCLETLPVFRDENEDMHGSGGNYYSYPNSTVRFQKSNTFTDPFFIVETLCIIWFSFEFLVRFLACPSKAVFFTNLMNIIDIVAIIPYFITLGTELAEKTEDGQQGQQAMSLAILRVIRLVRVFRIFKLSRHSKGLQILGQTLNASMRELGLLIFFLFIGVILFSSAVFFAEADERDSQFPSIPDAFWWAVVSMTTVGYGDMVPTTIGGKIVGSLCAIAGVLTIALPVPVIVSNFNYFYHRETEGEEQAQYLQVTSCPKIPSSPDLQKSRSASTLSKSDYMEIQEGVNHSNEDFREKNLKTANCTLGNTNYVNITKMLTDV</sequence>
<dbReference type="EMBL" id="M35664">
    <property type="protein sequence ID" value="AAA49933.1"/>
    <property type="molecule type" value="Genomic_DNA"/>
</dbReference>
<dbReference type="PIR" id="JH0313">
    <property type="entry name" value="JH0313"/>
</dbReference>
<dbReference type="SMR" id="P22739"/>
<dbReference type="GlyCosmos" id="P22739">
    <property type="glycosylation" value="1 site, No reported glycans"/>
</dbReference>
<dbReference type="ABCD" id="P22739">
    <property type="antibodies" value="1 sequenced antibody"/>
</dbReference>
<dbReference type="AGR" id="Xenbase:XB-GENE-991585"/>
<dbReference type="Xenbase" id="XB-GENE-991585">
    <property type="gene designation" value="kcna2.L"/>
</dbReference>
<dbReference type="Proteomes" id="UP000186698">
    <property type="component" value="Unplaced"/>
</dbReference>
<dbReference type="GO" id="GO:0043679">
    <property type="term" value="C:axon terminus"/>
    <property type="evidence" value="ECO:0000318"/>
    <property type="project" value="GO_Central"/>
</dbReference>
<dbReference type="GO" id="GO:0030425">
    <property type="term" value="C:dendrite"/>
    <property type="evidence" value="ECO:0000318"/>
    <property type="project" value="GO_Central"/>
</dbReference>
<dbReference type="GO" id="GO:0044224">
    <property type="term" value="C:juxtaparanode region of axon"/>
    <property type="evidence" value="ECO:0000250"/>
    <property type="project" value="UniProtKB"/>
</dbReference>
<dbReference type="GO" id="GO:0016020">
    <property type="term" value="C:membrane"/>
    <property type="evidence" value="ECO:0000318"/>
    <property type="project" value="GO_Central"/>
</dbReference>
<dbReference type="GO" id="GO:0005886">
    <property type="term" value="C:plasma membrane"/>
    <property type="evidence" value="ECO:0000250"/>
    <property type="project" value="UniProtKB"/>
</dbReference>
<dbReference type="GO" id="GO:0008076">
    <property type="term" value="C:voltage-gated potassium channel complex"/>
    <property type="evidence" value="ECO:0000250"/>
    <property type="project" value="UniProtKB"/>
</dbReference>
<dbReference type="GO" id="GO:0005251">
    <property type="term" value="F:delayed rectifier potassium channel activity"/>
    <property type="evidence" value="ECO:0000250"/>
    <property type="project" value="UniProtKB"/>
</dbReference>
<dbReference type="GO" id="GO:0005249">
    <property type="term" value="F:voltage-gated potassium channel activity"/>
    <property type="evidence" value="ECO:0000314"/>
    <property type="project" value="UniProtKB"/>
</dbReference>
<dbReference type="GO" id="GO:0001508">
    <property type="term" value="P:action potential"/>
    <property type="evidence" value="ECO:0000318"/>
    <property type="project" value="GO_Central"/>
</dbReference>
<dbReference type="GO" id="GO:0019228">
    <property type="term" value="P:neuronal action potential"/>
    <property type="evidence" value="ECO:0000250"/>
    <property type="project" value="UniProtKB"/>
</dbReference>
<dbReference type="GO" id="GO:0071805">
    <property type="term" value="P:potassium ion transmembrane transport"/>
    <property type="evidence" value="ECO:0000250"/>
    <property type="project" value="UniProtKB"/>
</dbReference>
<dbReference type="GO" id="GO:0051260">
    <property type="term" value="P:protein homooligomerization"/>
    <property type="evidence" value="ECO:0007669"/>
    <property type="project" value="InterPro"/>
</dbReference>
<dbReference type="FunFam" id="1.10.287.70:FF:000002">
    <property type="entry name" value="Potassium voltage-gated channel subfamily a member"/>
    <property type="match status" value="1"/>
</dbReference>
<dbReference type="FunFam" id="1.20.120.350:FF:000025">
    <property type="entry name" value="Potassium voltage-gated channel subfamily A member 2"/>
    <property type="match status" value="1"/>
</dbReference>
<dbReference type="FunFam" id="3.30.710.10:FF:000007">
    <property type="entry name" value="Potassium voltage-gated channel subfamily A member 2"/>
    <property type="match status" value="1"/>
</dbReference>
<dbReference type="Gene3D" id="1.10.287.70">
    <property type="match status" value="1"/>
</dbReference>
<dbReference type="Gene3D" id="3.30.710.10">
    <property type="entry name" value="Potassium Channel Kv1.1, Chain A"/>
    <property type="match status" value="1"/>
</dbReference>
<dbReference type="Gene3D" id="1.20.120.350">
    <property type="entry name" value="Voltage-gated potassium channels. Chain C"/>
    <property type="match status" value="1"/>
</dbReference>
<dbReference type="InterPro" id="IPR000210">
    <property type="entry name" value="BTB/POZ_dom"/>
</dbReference>
<dbReference type="InterPro" id="IPR005821">
    <property type="entry name" value="Ion_trans_dom"/>
</dbReference>
<dbReference type="InterPro" id="IPR003968">
    <property type="entry name" value="K_chnl_volt-dep_Kv"/>
</dbReference>
<dbReference type="InterPro" id="IPR003972">
    <property type="entry name" value="K_chnl_volt-dep_Kv1"/>
</dbReference>
<dbReference type="InterPro" id="IPR004049">
    <property type="entry name" value="K_chnl_volt-dep_Kv1.2"/>
</dbReference>
<dbReference type="InterPro" id="IPR011333">
    <property type="entry name" value="SKP1/BTB/POZ_sf"/>
</dbReference>
<dbReference type="InterPro" id="IPR003131">
    <property type="entry name" value="T1-type_BTB"/>
</dbReference>
<dbReference type="InterPro" id="IPR028325">
    <property type="entry name" value="VG_K_chnl"/>
</dbReference>
<dbReference type="InterPro" id="IPR027359">
    <property type="entry name" value="Volt_channel_dom_sf"/>
</dbReference>
<dbReference type="PANTHER" id="PTHR11537:SF23">
    <property type="entry name" value="POTASSIUM VOLTAGE-GATED CHANNEL SUBFAMILY A MEMBER 2"/>
    <property type="match status" value="1"/>
</dbReference>
<dbReference type="PANTHER" id="PTHR11537">
    <property type="entry name" value="VOLTAGE-GATED POTASSIUM CHANNEL"/>
    <property type="match status" value="1"/>
</dbReference>
<dbReference type="Pfam" id="PF02214">
    <property type="entry name" value="BTB_2"/>
    <property type="match status" value="1"/>
</dbReference>
<dbReference type="Pfam" id="PF00520">
    <property type="entry name" value="Ion_trans"/>
    <property type="match status" value="1"/>
</dbReference>
<dbReference type="PRINTS" id="PR00169">
    <property type="entry name" value="KCHANNEL"/>
</dbReference>
<dbReference type="PRINTS" id="PR01509">
    <property type="entry name" value="KV12CHANNEL"/>
</dbReference>
<dbReference type="PRINTS" id="PR01491">
    <property type="entry name" value="KVCHANNEL"/>
</dbReference>
<dbReference type="PRINTS" id="PR01496">
    <property type="entry name" value="SHAKERCHANEL"/>
</dbReference>
<dbReference type="SMART" id="SM00225">
    <property type="entry name" value="BTB"/>
    <property type="match status" value="1"/>
</dbReference>
<dbReference type="SUPFAM" id="SSF54695">
    <property type="entry name" value="POZ domain"/>
    <property type="match status" value="1"/>
</dbReference>
<dbReference type="SUPFAM" id="SSF81324">
    <property type="entry name" value="Voltage-gated potassium channels"/>
    <property type="match status" value="1"/>
</dbReference>
<protein>
    <recommendedName>
        <fullName>Potassium voltage-gated channel subfamily A member 2</fullName>
    </recommendedName>
    <alternativeName>
        <fullName>Voltage-gated potassium channel subunit Kv1.2</fullName>
    </alternativeName>
    <alternativeName>
        <fullName>xSHA2</fullName>
    </alternativeName>
</protein>